<sequence length="304" mass="33508">MSWIERIKSNITPTRKASIPEGVWTKCDSCGQVLYRAELERNLEVCPKCDHHMRMTARNRLHSLLDEGSLVELGSELEPKDELKFRDSKKYKDRLASAQKETGEKDALVVMKGTLYGMPVVAAAFEFAFMGVSMGSVVGARFVRAVEQAQEDNCPLICFSASGGARMQEALMSLMQMAKTSAALAKMQERGLPYISVLTDPTMGGVSASFAMLGDLNIAEPKALIGFAGPRVIEQTVREKLPPRFQRSEFLIEKGAIDMIVRRPEMRLKLASILAKLMNLPAPNPEAPREGVVVPPVPDQEPEA</sequence>
<accession>Q0T2G9</accession>
<name>ACCD_SHIF8</name>
<organism>
    <name type="scientific">Shigella flexneri serotype 5b (strain 8401)</name>
    <dbReference type="NCBI Taxonomy" id="373384"/>
    <lineage>
        <taxon>Bacteria</taxon>
        <taxon>Pseudomonadati</taxon>
        <taxon>Pseudomonadota</taxon>
        <taxon>Gammaproteobacteria</taxon>
        <taxon>Enterobacterales</taxon>
        <taxon>Enterobacteriaceae</taxon>
        <taxon>Shigella</taxon>
    </lineage>
</organism>
<comment type="function">
    <text evidence="1">Component of the acetyl coenzyme A carboxylase (ACC) complex. Biotin carboxylase (BC) catalyzes the carboxylation of biotin on its carrier protein (BCCP) and then the CO(2) group is transferred by the transcarboxylase to acetyl-CoA to form malonyl-CoA.</text>
</comment>
<comment type="catalytic activity">
    <reaction evidence="1">
        <text>N(6)-carboxybiotinyl-L-lysyl-[protein] + acetyl-CoA = N(6)-biotinyl-L-lysyl-[protein] + malonyl-CoA</text>
        <dbReference type="Rhea" id="RHEA:54728"/>
        <dbReference type="Rhea" id="RHEA-COMP:10505"/>
        <dbReference type="Rhea" id="RHEA-COMP:10506"/>
        <dbReference type="ChEBI" id="CHEBI:57288"/>
        <dbReference type="ChEBI" id="CHEBI:57384"/>
        <dbReference type="ChEBI" id="CHEBI:83144"/>
        <dbReference type="ChEBI" id="CHEBI:83145"/>
        <dbReference type="EC" id="2.1.3.15"/>
    </reaction>
</comment>
<comment type="cofactor">
    <cofactor evidence="1">
        <name>Zn(2+)</name>
        <dbReference type="ChEBI" id="CHEBI:29105"/>
    </cofactor>
    <text evidence="1">Binds 1 zinc ion per subunit.</text>
</comment>
<comment type="pathway">
    <text evidence="1">Lipid metabolism; malonyl-CoA biosynthesis; malonyl-CoA from acetyl-CoA: step 1/1.</text>
</comment>
<comment type="subunit">
    <text evidence="1">Acetyl-CoA carboxylase is a heterohexamer composed of biotin carboxyl carrier protein (AccB), biotin carboxylase (AccC) and two subunits each of ACCase subunit alpha (AccA) and ACCase subunit beta (AccD).</text>
</comment>
<comment type="subcellular location">
    <subcellularLocation>
        <location evidence="1">Cytoplasm</location>
    </subcellularLocation>
</comment>
<comment type="similarity">
    <text evidence="1">Belongs to the AccD/PCCB family.</text>
</comment>
<dbReference type="EC" id="2.1.3.15" evidence="1"/>
<dbReference type="EMBL" id="CP000266">
    <property type="protein sequence ID" value="ABF04496.1"/>
    <property type="molecule type" value="Genomic_DNA"/>
</dbReference>
<dbReference type="RefSeq" id="WP_000118392.1">
    <property type="nucleotide sequence ID" value="NC_008258.1"/>
</dbReference>
<dbReference type="SMR" id="Q0T2G9"/>
<dbReference type="KEGG" id="sfv:SFV_2385"/>
<dbReference type="HOGENOM" id="CLU_015486_1_0_6"/>
<dbReference type="UniPathway" id="UPA00655">
    <property type="reaction ID" value="UER00711"/>
</dbReference>
<dbReference type="Proteomes" id="UP000000659">
    <property type="component" value="Chromosome"/>
</dbReference>
<dbReference type="GO" id="GO:0009329">
    <property type="term" value="C:acetate CoA-transferase complex"/>
    <property type="evidence" value="ECO:0007669"/>
    <property type="project" value="TreeGrafter"/>
</dbReference>
<dbReference type="GO" id="GO:0003989">
    <property type="term" value="F:acetyl-CoA carboxylase activity"/>
    <property type="evidence" value="ECO:0007669"/>
    <property type="project" value="InterPro"/>
</dbReference>
<dbReference type="GO" id="GO:0005524">
    <property type="term" value="F:ATP binding"/>
    <property type="evidence" value="ECO:0007669"/>
    <property type="project" value="UniProtKB-KW"/>
</dbReference>
<dbReference type="GO" id="GO:0016743">
    <property type="term" value="F:carboxyl- or carbamoyltransferase activity"/>
    <property type="evidence" value="ECO:0007669"/>
    <property type="project" value="UniProtKB-UniRule"/>
</dbReference>
<dbReference type="GO" id="GO:0008270">
    <property type="term" value="F:zinc ion binding"/>
    <property type="evidence" value="ECO:0007669"/>
    <property type="project" value="UniProtKB-UniRule"/>
</dbReference>
<dbReference type="GO" id="GO:0006633">
    <property type="term" value="P:fatty acid biosynthetic process"/>
    <property type="evidence" value="ECO:0007669"/>
    <property type="project" value="UniProtKB-KW"/>
</dbReference>
<dbReference type="GO" id="GO:2001295">
    <property type="term" value="P:malonyl-CoA biosynthetic process"/>
    <property type="evidence" value="ECO:0007669"/>
    <property type="project" value="UniProtKB-UniRule"/>
</dbReference>
<dbReference type="FunFam" id="3.90.226.10:FF:000013">
    <property type="entry name" value="Acetyl-coenzyme A carboxylase carboxyl transferase subunit beta"/>
    <property type="match status" value="1"/>
</dbReference>
<dbReference type="Gene3D" id="3.90.226.10">
    <property type="entry name" value="2-enoyl-CoA Hydratase, Chain A, domain 1"/>
    <property type="match status" value="1"/>
</dbReference>
<dbReference type="HAMAP" id="MF_01395">
    <property type="entry name" value="AcetylCoA_CT_beta"/>
    <property type="match status" value="1"/>
</dbReference>
<dbReference type="InterPro" id="IPR034733">
    <property type="entry name" value="AcCoA_carboxyl_beta"/>
</dbReference>
<dbReference type="InterPro" id="IPR000438">
    <property type="entry name" value="Acetyl_CoA_COase_Trfase_b_su"/>
</dbReference>
<dbReference type="InterPro" id="IPR029045">
    <property type="entry name" value="ClpP/crotonase-like_dom_sf"/>
</dbReference>
<dbReference type="InterPro" id="IPR011762">
    <property type="entry name" value="COA_CT_N"/>
</dbReference>
<dbReference type="InterPro" id="IPR041010">
    <property type="entry name" value="Znf-ACC"/>
</dbReference>
<dbReference type="NCBIfam" id="TIGR00515">
    <property type="entry name" value="accD"/>
    <property type="match status" value="1"/>
</dbReference>
<dbReference type="PANTHER" id="PTHR42995">
    <property type="entry name" value="ACETYL-COENZYME A CARBOXYLASE CARBOXYL TRANSFERASE SUBUNIT BETA, CHLOROPLASTIC"/>
    <property type="match status" value="1"/>
</dbReference>
<dbReference type="PANTHER" id="PTHR42995:SF5">
    <property type="entry name" value="ACETYL-COENZYME A CARBOXYLASE CARBOXYL TRANSFERASE SUBUNIT BETA, CHLOROPLASTIC"/>
    <property type="match status" value="1"/>
</dbReference>
<dbReference type="Pfam" id="PF01039">
    <property type="entry name" value="Carboxyl_trans"/>
    <property type="match status" value="1"/>
</dbReference>
<dbReference type="Pfam" id="PF17848">
    <property type="entry name" value="Zn_ribbon_ACC"/>
    <property type="match status" value="1"/>
</dbReference>
<dbReference type="PRINTS" id="PR01070">
    <property type="entry name" value="ACCCTRFRASEB"/>
</dbReference>
<dbReference type="SUPFAM" id="SSF52096">
    <property type="entry name" value="ClpP/crotonase"/>
    <property type="match status" value="1"/>
</dbReference>
<dbReference type="PROSITE" id="PS50980">
    <property type="entry name" value="COA_CT_NTER"/>
    <property type="match status" value="1"/>
</dbReference>
<keyword id="KW-0067">ATP-binding</keyword>
<keyword id="KW-0963">Cytoplasm</keyword>
<keyword id="KW-0275">Fatty acid biosynthesis</keyword>
<keyword id="KW-0276">Fatty acid metabolism</keyword>
<keyword id="KW-0444">Lipid biosynthesis</keyword>
<keyword id="KW-0443">Lipid metabolism</keyword>
<keyword id="KW-0479">Metal-binding</keyword>
<keyword id="KW-0547">Nucleotide-binding</keyword>
<keyword id="KW-0808">Transferase</keyword>
<keyword id="KW-0862">Zinc</keyword>
<keyword id="KW-0863">Zinc-finger</keyword>
<protein>
    <recommendedName>
        <fullName evidence="1">Acetyl-coenzyme A carboxylase carboxyl transferase subunit beta</fullName>
        <shortName evidence="1">ACCase subunit beta</shortName>
        <shortName evidence="1">Acetyl-CoA carboxylase carboxyltransferase subunit beta</shortName>
        <ecNumber evidence="1">2.1.3.15</ecNumber>
    </recommendedName>
</protein>
<feature type="chain" id="PRO_0000359067" description="Acetyl-coenzyme A carboxylase carboxyl transferase subunit beta">
    <location>
        <begin position="1"/>
        <end position="304"/>
    </location>
</feature>
<feature type="domain" description="CoA carboxyltransferase N-terminal" evidence="2">
    <location>
        <begin position="23"/>
        <end position="292"/>
    </location>
</feature>
<feature type="zinc finger region" description="C4-type" evidence="1">
    <location>
        <begin position="27"/>
        <end position="49"/>
    </location>
</feature>
<feature type="region of interest" description="Disordered" evidence="3">
    <location>
        <begin position="284"/>
        <end position="304"/>
    </location>
</feature>
<feature type="compositionally biased region" description="Pro residues" evidence="3">
    <location>
        <begin position="295"/>
        <end position="304"/>
    </location>
</feature>
<feature type="binding site" evidence="1">
    <location>
        <position position="27"/>
    </location>
    <ligand>
        <name>Zn(2+)</name>
        <dbReference type="ChEBI" id="CHEBI:29105"/>
    </ligand>
</feature>
<feature type="binding site" evidence="1">
    <location>
        <position position="30"/>
    </location>
    <ligand>
        <name>Zn(2+)</name>
        <dbReference type="ChEBI" id="CHEBI:29105"/>
    </ligand>
</feature>
<feature type="binding site" evidence="1">
    <location>
        <position position="46"/>
    </location>
    <ligand>
        <name>Zn(2+)</name>
        <dbReference type="ChEBI" id="CHEBI:29105"/>
    </ligand>
</feature>
<feature type="binding site" evidence="1">
    <location>
        <position position="49"/>
    </location>
    <ligand>
        <name>Zn(2+)</name>
        <dbReference type="ChEBI" id="CHEBI:29105"/>
    </ligand>
</feature>
<evidence type="ECO:0000255" key="1">
    <source>
        <dbReference type="HAMAP-Rule" id="MF_01395"/>
    </source>
</evidence>
<evidence type="ECO:0000255" key="2">
    <source>
        <dbReference type="PROSITE-ProRule" id="PRU01136"/>
    </source>
</evidence>
<evidence type="ECO:0000256" key="3">
    <source>
        <dbReference type="SAM" id="MobiDB-lite"/>
    </source>
</evidence>
<proteinExistence type="inferred from homology"/>
<gene>
    <name evidence="1" type="primary">accD</name>
    <name type="ordered locus">SFV_2385</name>
</gene>
<reference key="1">
    <citation type="journal article" date="2006" name="BMC Genomics">
        <title>Complete genome sequence of Shigella flexneri 5b and comparison with Shigella flexneri 2a.</title>
        <authorList>
            <person name="Nie H."/>
            <person name="Yang F."/>
            <person name="Zhang X."/>
            <person name="Yang J."/>
            <person name="Chen L."/>
            <person name="Wang J."/>
            <person name="Xiong Z."/>
            <person name="Peng J."/>
            <person name="Sun L."/>
            <person name="Dong J."/>
            <person name="Xue Y."/>
            <person name="Xu X."/>
            <person name="Chen S."/>
            <person name="Yao Z."/>
            <person name="Shen Y."/>
            <person name="Jin Q."/>
        </authorList>
    </citation>
    <scope>NUCLEOTIDE SEQUENCE [LARGE SCALE GENOMIC DNA]</scope>
    <source>
        <strain>8401</strain>
    </source>
</reference>